<gene>
    <name evidence="2" type="primary">mutM</name>
    <name evidence="2" type="synonym">fpg</name>
    <name type="ordered locus">Mmwyl1_0631</name>
</gene>
<evidence type="ECO:0000250" key="1"/>
<evidence type="ECO:0000255" key="2">
    <source>
        <dbReference type="HAMAP-Rule" id="MF_00103"/>
    </source>
</evidence>
<feature type="initiator methionine" description="Removed" evidence="1">
    <location>
        <position position="1"/>
    </location>
</feature>
<feature type="chain" id="PRO_1000075702" description="Formamidopyrimidine-DNA glycosylase">
    <location>
        <begin position="2"/>
        <end position="272"/>
    </location>
</feature>
<feature type="zinc finger region" description="FPG-type" evidence="2">
    <location>
        <begin position="238"/>
        <end position="272"/>
    </location>
</feature>
<feature type="active site" description="Schiff-base intermediate with DNA" evidence="2">
    <location>
        <position position="2"/>
    </location>
</feature>
<feature type="active site" description="Proton donor" evidence="2">
    <location>
        <position position="3"/>
    </location>
</feature>
<feature type="active site" description="Proton donor; for beta-elimination activity" evidence="2">
    <location>
        <position position="58"/>
    </location>
</feature>
<feature type="active site" description="Proton donor; for delta-elimination activity" evidence="2">
    <location>
        <position position="262"/>
    </location>
</feature>
<feature type="binding site" evidence="2">
    <location>
        <position position="91"/>
    </location>
    <ligand>
        <name>DNA</name>
        <dbReference type="ChEBI" id="CHEBI:16991"/>
    </ligand>
</feature>
<feature type="binding site" evidence="2">
    <location>
        <position position="111"/>
    </location>
    <ligand>
        <name>DNA</name>
        <dbReference type="ChEBI" id="CHEBI:16991"/>
    </ligand>
</feature>
<feature type="binding site" evidence="2">
    <location>
        <position position="153"/>
    </location>
    <ligand>
        <name>DNA</name>
        <dbReference type="ChEBI" id="CHEBI:16991"/>
    </ligand>
</feature>
<accession>A6VSY6</accession>
<reference key="1">
    <citation type="submission" date="2007-06" db="EMBL/GenBank/DDBJ databases">
        <title>Complete sequence of Marinomonas sp. MWYL1.</title>
        <authorList>
            <consortium name="US DOE Joint Genome Institute"/>
            <person name="Copeland A."/>
            <person name="Lucas S."/>
            <person name="Lapidus A."/>
            <person name="Barry K."/>
            <person name="Glavina del Rio T."/>
            <person name="Dalin E."/>
            <person name="Tice H."/>
            <person name="Pitluck S."/>
            <person name="Kiss H."/>
            <person name="Brettin T."/>
            <person name="Bruce D."/>
            <person name="Detter J.C."/>
            <person name="Han C."/>
            <person name="Schmutz J."/>
            <person name="Larimer F."/>
            <person name="Land M."/>
            <person name="Hauser L."/>
            <person name="Kyrpides N."/>
            <person name="Kim E."/>
            <person name="Johnston A.W.B."/>
            <person name="Todd J.D."/>
            <person name="Rogers R."/>
            <person name="Wexler M."/>
            <person name="Bond P.L."/>
            <person name="Li Y."/>
            <person name="Richardson P."/>
        </authorList>
    </citation>
    <scope>NUCLEOTIDE SEQUENCE [LARGE SCALE GENOMIC DNA]</scope>
    <source>
        <strain>MWYL1</strain>
    </source>
</reference>
<comment type="function">
    <text evidence="2">Involved in base excision repair of DNA damaged by oxidation or by mutagenic agents. Acts as a DNA glycosylase that recognizes and removes damaged bases. Has a preference for oxidized purines, such as 7,8-dihydro-8-oxoguanine (8-oxoG). Has AP (apurinic/apyrimidinic) lyase activity and introduces nicks in the DNA strand. Cleaves the DNA backbone by beta-delta elimination to generate a single-strand break at the site of the removed base with both 3'- and 5'-phosphates.</text>
</comment>
<comment type="catalytic activity">
    <reaction evidence="2">
        <text>Hydrolysis of DNA containing ring-opened 7-methylguanine residues, releasing 2,6-diamino-4-hydroxy-5-(N-methyl)formamidopyrimidine.</text>
        <dbReference type="EC" id="3.2.2.23"/>
    </reaction>
</comment>
<comment type="catalytic activity">
    <reaction evidence="2">
        <text>2'-deoxyribonucleotide-(2'-deoxyribose 5'-phosphate)-2'-deoxyribonucleotide-DNA = a 3'-end 2'-deoxyribonucleotide-(2,3-dehydro-2,3-deoxyribose 5'-phosphate)-DNA + a 5'-end 5'-phospho-2'-deoxyribonucleoside-DNA + H(+)</text>
        <dbReference type="Rhea" id="RHEA:66592"/>
        <dbReference type="Rhea" id="RHEA-COMP:13180"/>
        <dbReference type="Rhea" id="RHEA-COMP:16897"/>
        <dbReference type="Rhea" id="RHEA-COMP:17067"/>
        <dbReference type="ChEBI" id="CHEBI:15378"/>
        <dbReference type="ChEBI" id="CHEBI:136412"/>
        <dbReference type="ChEBI" id="CHEBI:157695"/>
        <dbReference type="ChEBI" id="CHEBI:167181"/>
        <dbReference type="EC" id="4.2.99.18"/>
    </reaction>
</comment>
<comment type="cofactor">
    <cofactor evidence="2">
        <name>Zn(2+)</name>
        <dbReference type="ChEBI" id="CHEBI:29105"/>
    </cofactor>
    <text evidence="2">Binds 1 zinc ion per subunit.</text>
</comment>
<comment type="subunit">
    <text evidence="2">Monomer.</text>
</comment>
<comment type="similarity">
    <text evidence="2">Belongs to the FPG family.</text>
</comment>
<proteinExistence type="inferred from homology"/>
<protein>
    <recommendedName>
        <fullName evidence="2">Formamidopyrimidine-DNA glycosylase</fullName>
        <shortName evidence="2">Fapy-DNA glycosylase</shortName>
        <ecNumber evidence="2">3.2.2.23</ecNumber>
    </recommendedName>
    <alternativeName>
        <fullName evidence="2">DNA-(apurinic or apyrimidinic site) lyase MutM</fullName>
        <shortName evidence="2">AP lyase MutM</shortName>
        <ecNumber evidence="2">4.2.99.18</ecNumber>
    </alternativeName>
</protein>
<keyword id="KW-0227">DNA damage</keyword>
<keyword id="KW-0234">DNA repair</keyword>
<keyword id="KW-0238">DNA-binding</keyword>
<keyword id="KW-0326">Glycosidase</keyword>
<keyword id="KW-0378">Hydrolase</keyword>
<keyword id="KW-0456">Lyase</keyword>
<keyword id="KW-0479">Metal-binding</keyword>
<keyword id="KW-0511">Multifunctional enzyme</keyword>
<keyword id="KW-0862">Zinc</keyword>
<keyword id="KW-0863">Zinc-finger</keyword>
<dbReference type="EC" id="3.2.2.23" evidence="2"/>
<dbReference type="EC" id="4.2.99.18" evidence="2"/>
<dbReference type="EMBL" id="CP000749">
    <property type="protein sequence ID" value="ABR69565.1"/>
    <property type="molecule type" value="Genomic_DNA"/>
</dbReference>
<dbReference type="SMR" id="A6VSY6"/>
<dbReference type="STRING" id="400668.Mmwyl1_0631"/>
<dbReference type="KEGG" id="mmw:Mmwyl1_0631"/>
<dbReference type="eggNOG" id="COG0266">
    <property type="taxonomic scope" value="Bacteria"/>
</dbReference>
<dbReference type="HOGENOM" id="CLU_038423_1_1_6"/>
<dbReference type="OrthoDB" id="9800855at2"/>
<dbReference type="GO" id="GO:0034039">
    <property type="term" value="F:8-oxo-7,8-dihydroguanine DNA N-glycosylase activity"/>
    <property type="evidence" value="ECO:0007669"/>
    <property type="project" value="TreeGrafter"/>
</dbReference>
<dbReference type="GO" id="GO:0140078">
    <property type="term" value="F:class I DNA-(apurinic or apyrimidinic site) endonuclease activity"/>
    <property type="evidence" value="ECO:0007669"/>
    <property type="project" value="UniProtKB-EC"/>
</dbReference>
<dbReference type="GO" id="GO:0003684">
    <property type="term" value="F:damaged DNA binding"/>
    <property type="evidence" value="ECO:0007669"/>
    <property type="project" value="InterPro"/>
</dbReference>
<dbReference type="GO" id="GO:0008270">
    <property type="term" value="F:zinc ion binding"/>
    <property type="evidence" value="ECO:0007669"/>
    <property type="project" value="UniProtKB-UniRule"/>
</dbReference>
<dbReference type="GO" id="GO:0006284">
    <property type="term" value="P:base-excision repair"/>
    <property type="evidence" value="ECO:0007669"/>
    <property type="project" value="InterPro"/>
</dbReference>
<dbReference type="CDD" id="cd08966">
    <property type="entry name" value="EcFpg-like_N"/>
    <property type="match status" value="1"/>
</dbReference>
<dbReference type="FunFam" id="1.10.8.50:FF:000003">
    <property type="entry name" value="Formamidopyrimidine-DNA glycosylase"/>
    <property type="match status" value="1"/>
</dbReference>
<dbReference type="FunFam" id="3.20.190.10:FF:000001">
    <property type="entry name" value="Formamidopyrimidine-DNA glycosylase"/>
    <property type="match status" value="1"/>
</dbReference>
<dbReference type="Gene3D" id="1.10.8.50">
    <property type="match status" value="1"/>
</dbReference>
<dbReference type="Gene3D" id="3.20.190.10">
    <property type="entry name" value="MutM-like, N-terminal"/>
    <property type="match status" value="1"/>
</dbReference>
<dbReference type="HAMAP" id="MF_00103">
    <property type="entry name" value="Fapy_DNA_glycosyl"/>
    <property type="match status" value="1"/>
</dbReference>
<dbReference type="InterPro" id="IPR015886">
    <property type="entry name" value="DNA_glyclase/AP_lyase_DNA-bd"/>
</dbReference>
<dbReference type="InterPro" id="IPR015887">
    <property type="entry name" value="DNA_glyclase_Znf_dom_DNA_BS"/>
</dbReference>
<dbReference type="InterPro" id="IPR020629">
    <property type="entry name" value="Formamido-pyr_DNA_Glyclase"/>
</dbReference>
<dbReference type="InterPro" id="IPR012319">
    <property type="entry name" value="FPG_cat"/>
</dbReference>
<dbReference type="InterPro" id="IPR035937">
    <property type="entry name" value="MutM-like_N-ter"/>
</dbReference>
<dbReference type="InterPro" id="IPR010979">
    <property type="entry name" value="Ribosomal_uS13-like_H2TH"/>
</dbReference>
<dbReference type="InterPro" id="IPR000214">
    <property type="entry name" value="Znf_DNA_glyclase/AP_lyase"/>
</dbReference>
<dbReference type="InterPro" id="IPR010663">
    <property type="entry name" value="Znf_FPG/IleRS"/>
</dbReference>
<dbReference type="NCBIfam" id="TIGR00577">
    <property type="entry name" value="fpg"/>
    <property type="match status" value="1"/>
</dbReference>
<dbReference type="NCBIfam" id="NF002211">
    <property type="entry name" value="PRK01103.1"/>
    <property type="match status" value="1"/>
</dbReference>
<dbReference type="PANTHER" id="PTHR22993">
    <property type="entry name" value="FORMAMIDOPYRIMIDINE-DNA GLYCOSYLASE"/>
    <property type="match status" value="1"/>
</dbReference>
<dbReference type="PANTHER" id="PTHR22993:SF9">
    <property type="entry name" value="FORMAMIDOPYRIMIDINE-DNA GLYCOSYLASE"/>
    <property type="match status" value="1"/>
</dbReference>
<dbReference type="Pfam" id="PF01149">
    <property type="entry name" value="Fapy_DNA_glyco"/>
    <property type="match status" value="1"/>
</dbReference>
<dbReference type="Pfam" id="PF06831">
    <property type="entry name" value="H2TH"/>
    <property type="match status" value="1"/>
</dbReference>
<dbReference type="Pfam" id="PF06827">
    <property type="entry name" value="zf-FPG_IleRS"/>
    <property type="match status" value="1"/>
</dbReference>
<dbReference type="SMART" id="SM00898">
    <property type="entry name" value="Fapy_DNA_glyco"/>
    <property type="match status" value="1"/>
</dbReference>
<dbReference type="SMART" id="SM01232">
    <property type="entry name" value="H2TH"/>
    <property type="match status" value="1"/>
</dbReference>
<dbReference type="SUPFAM" id="SSF57716">
    <property type="entry name" value="Glucocorticoid receptor-like (DNA-binding domain)"/>
    <property type="match status" value="1"/>
</dbReference>
<dbReference type="SUPFAM" id="SSF81624">
    <property type="entry name" value="N-terminal domain of MutM-like DNA repair proteins"/>
    <property type="match status" value="1"/>
</dbReference>
<dbReference type="SUPFAM" id="SSF46946">
    <property type="entry name" value="S13-like H2TH domain"/>
    <property type="match status" value="1"/>
</dbReference>
<dbReference type="PROSITE" id="PS51068">
    <property type="entry name" value="FPG_CAT"/>
    <property type="match status" value="1"/>
</dbReference>
<dbReference type="PROSITE" id="PS01242">
    <property type="entry name" value="ZF_FPG_1"/>
    <property type="match status" value="1"/>
</dbReference>
<dbReference type="PROSITE" id="PS51066">
    <property type="entry name" value="ZF_FPG_2"/>
    <property type="match status" value="1"/>
</dbReference>
<sequence length="272" mass="30473">MPELPEVETTLRGIEPKLVGRSLARVDIRQPKLRWLITPELSSEMVGEEITHLSRRGKYIGIHTSKGTLIVHLGMSGSLYFVPAETPPLFHDHVDFCFADDDVWLRYTDPRRFGAILWTTEDWHEHELIKHLGPEPLSDMFNADMLYVRAKGRKVPIKTFIMDSKVVVGVGNIYANEALFKAGIRPDRLAGNISKARLARLVECIKVVLAAAIKQGGTTLKDFVGGDGKPGYFKQELAVYGRANKACVICSKPLKEIRQAQRSTVFCINCQS</sequence>
<organism>
    <name type="scientific">Marinomonas sp. (strain MWYL1)</name>
    <dbReference type="NCBI Taxonomy" id="400668"/>
    <lineage>
        <taxon>Bacteria</taxon>
        <taxon>Pseudomonadati</taxon>
        <taxon>Pseudomonadota</taxon>
        <taxon>Gammaproteobacteria</taxon>
        <taxon>Oceanospirillales</taxon>
        <taxon>Oceanospirillaceae</taxon>
        <taxon>Marinomonas</taxon>
    </lineage>
</organism>
<name>FPG_MARMS</name>